<proteinExistence type="inferred from homology"/>
<name>RLME_DECAR</name>
<reference key="1">
    <citation type="journal article" date="2009" name="BMC Genomics">
        <title>Metabolic analysis of the soil microbe Dechloromonas aromatica str. RCB: indications of a surprisingly complex life-style and cryptic anaerobic pathways for aromatic degradation.</title>
        <authorList>
            <person name="Salinero K.K."/>
            <person name="Keller K."/>
            <person name="Feil W.S."/>
            <person name="Feil H."/>
            <person name="Trong S."/>
            <person name="Di Bartolo G."/>
            <person name="Lapidus A."/>
        </authorList>
    </citation>
    <scope>NUCLEOTIDE SEQUENCE [LARGE SCALE GENOMIC DNA]</scope>
    <source>
        <strain>RCB</strain>
    </source>
</reference>
<keyword id="KW-0963">Cytoplasm</keyword>
<keyword id="KW-0489">Methyltransferase</keyword>
<keyword id="KW-0698">rRNA processing</keyword>
<keyword id="KW-0949">S-adenosyl-L-methionine</keyword>
<keyword id="KW-0808">Transferase</keyword>
<accession>Q47HI2</accession>
<feature type="chain" id="PRO_0000155490" description="Ribosomal RNA large subunit methyltransferase E">
    <location>
        <begin position="1"/>
        <end position="205"/>
    </location>
</feature>
<feature type="active site" description="Proton acceptor" evidence="1">
    <location>
        <position position="161"/>
    </location>
</feature>
<feature type="binding site" evidence="1">
    <location>
        <position position="60"/>
    </location>
    <ligand>
        <name>S-adenosyl-L-methionine</name>
        <dbReference type="ChEBI" id="CHEBI:59789"/>
    </ligand>
</feature>
<feature type="binding site" evidence="1">
    <location>
        <position position="62"/>
    </location>
    <ligand>
        <name>S-adenosyl-L-methionine</name>
        <dbReference type="ChEBI" id="CHEBI:59789"/>
    </ligand>
</feature>
<feature type="binding site" evidence="1">
    <location>
        <position position="80"/>
    </location>
    <ligand>
        <name>S-adenosyl-L-methionine</name>
        <dbReference type="ChEBI" id="CHEBI:59789"/>
    </ligand>
</feature>
<feature type="binding site" evidence="1">
    <location>
        <position position="96"/>
    </location>
    <ligand>
        <name>S-adenosyl-L-methionine</name>
        <dbReference type="ChEBI" id="CHEBI:59789"/>
    </ligand>
</feature>
<feature type="binding site" evidence="1">
    <location>
        <position position="121"/>
    </location>
    <ligand>
        <name>S-adenosyl-L-methionine</name>
        <dbReference type="ChEBI" id="CHEBI:59789"/>
    </ligand>
</feature>
<organism>
    <name type="scientific">Dechloromonas aromatica (strain RCB)</name>
    <dbReference type="NCBI Taxonomy" id="159087"/>
    <lineage>
        <taxon>Bacteria</taxon>
        <taxon>Pseudomonadati</taxon>
        <taxon>Pseudomonadota</taxon>
        <taxon>Betaproteobacteria</taxon>
        <taxon>Rhodocyclales</taxon>
        <taxon>Azonexaceae</taxon>
        <taxon>Dechloromonas</taxon>
    </lineage>
</organism>
<protein>
    <recommendedName>
        <fullName evidence="1">Ribosomal RNA large subunit methyltransferase E</fullName>
        <ecNumber evidence="1">2.1.1.166</ecNumber>
    </recommendedName>
    <alternativeName>
        <fullName evidence="1">23S rRNA Um2552 methyltransferase</fullName>
    </alternativeName>
    <alternativeName>
        <fullName evidence="1">rRNA (uridine-2'-O-)-methyltransferase</fullName>
    </alternativeName>
</protein>
<gene>
    <name evidence="1" type="primary">rlmE</name>
    <name evidence="1" type="synonym">ftsJ</name>
    <name evidence="1" type="synonym">rrmJ</name>
    <name type="ordered locus">Daro_0943</name>
</gene>
<evidence type="ECO:0000255" key="1">
    <source>
        <dbReference type="HAMAP-Rule" id="MF_01547"/>
    </source>
</evidence>
<sequence>MKRTRTSKAWMREHINDTYVQLARKEGWRSRAAFKLMEMDDKDKLLKHGEVVVDLGATPGGWSQVAVKRVGDGGLVFALDLLEMEPIHGVHFIQGDFREDEVLQQLEEQLGERRVGLVMSDMAPNMSGVPLVDQARIMHLAELGLEFSRVHLKPEGAFLVKVFQGTDYETFLKQMRETFKTVAVRKPDASRDRSPELYLLGRTLR</sequence>
<comment type="function">
    <text evidence="1">Specifically methylates the uridine in position 2552 of 23S rRNA at the 2'-O position of the ribose in the fully assembled 50S ribosomal subunit.</text>
</comment>
<comment type="catalytic activity">
    <reaction evidence="1">
        <text>uridine(2552) in 23S rRNA + S-adenosyl-L-methionine = 2'-O-methyluridine(2552) in 23S rRNA + S-adenosyl-L-homocysteine + H(+)</text>
        <dbReference type="Rhea" id="RHEA:42720"/>
        <dbReference type="Rhea" id="RHEA-COMP:10202"/>
        <dbReference type="Rhea" id="RHEA-COMP:10203"/>
        <dbReference type="ChEBI" id="CHEBI:15378"/>
        <dbReference type="ChEBI" id="CHEBI:57856"/>
        <dbReference type="ChEBI" id="CHEBI:59789"/>
        <dbReference type="ChEBI" id="CHEBI:65315"/>
        <dbReference type="ChEBI" id="CHEBI:74478"/>
        <dbReference type="EC" id="2.1.1.166"/>
    </reaction>
</comment>
<comment type="subcellular location">
    <subcellularLocation>
        <location evidence="1">Cytoplasm</location>
    </subcellularLocation>
</comment>
<comment type="similarity">
    <text evidence="1">Belongs to the class I-like SAM-binding methyltransferase superfamily. RNA methyltransferase RlmE family.</text>
</comment>
<dbReference type="EC" id="2.1.1.166" evidence="1"/>
<dbReference type="EMBL" id="CP000089">
    <property type="protein sequence ID" value="AAZ45699.1"/>
    <property type="molecule type" value="Genomic_DNA"/>
</dbReference>
<dbReference type="SMR" id="Q47HI2"/>
<dbReference type="STRING" id="159087.Daro_0943"/>
<dbReference type="KEGG" id="dar:Daro_0943"/>
<dbReference type="eggNOG" id="COG0293">
    <property type="taxonomic scope" value="Bacteria"/>
</dbReference>
<dbReference type="HOGENOM" id="CLU_009422_4_0_4"/>
<dbReference type="OrthoDB" id="9790080at2"/>
<dbReference type="GO" id="GO:0005737">
    <property type="term" value="C:cytoplasm"/>
    <property type="evidence" value="ECO:0007669"/>
    <property type="project" value="UniProtKB-SubCell"/>
</dbReference>
<dbReference type="GO" id="GO:0008650">
    <property type="term" value="F:rRNA (uridine-2'-O-)-methyltransferase activity"/>
    <property type="evidence" value="ECO:0007669"/>
    <property type="project" value="UniProtKB-UniRule"/>
</dbReference>
<dbReference type="FunFam" id="3.40.50.150:FF:000005">
    <property type="entry name" value="Ribosomal RNA large subunit methyltransferase E"/>
    <property type="match status" value="1"/>
</dbReference>
<dbReference type="Gene3D" id="3.40.50.150">
    <property type="entry name" value="Vaccinia Virus protein VP39"/>
    <property type="match status" value="1"/>
</dbReference>
<dbReference type="HAMAP" id="MF_01547">
    <property type="entry name" value="RNA_methyltr_E"/>
    <property type="match status" value="1"/>
</dbReference>
<dbReference type="InterPro" id="IPR050082">
    <property type="entry name" value="RNA_methyltr_RlmE"/>
</dbReference>
<dbReference type="InterPro" id="IPR002877">
    <property type="entry name" value="RNA_MeTrfase_FtsJ_dom"/>
</dbReference>
<dbReference type="InterPro" id="IPR015507">
    <property type="entry name" value="rRNA-MeTfrase_E"/>
</dbReference>
<dbReference type="InterPro" id="IPR029063">
    <property type="entry name" value="SAM-dependent_MTases_sf"/>
</dbReference>
<dbReference type="NCBIfam" id="NF008390">
    <property type="entry name" value="PRK11188.1"/>
    <property type="match status" value="1"/>
</dbReference>
<dbReference type="PANTHER" id="PTHR10920">
    <property type="entry name" value="RIBOSOMAL RNA METHYLTRANSFERASE"/>
    <property type="match status" value="1"/>
</dbReference>
<dbReference type="PANTHER" id="PTHR10920:SF18">
    <property type="entry name" value="RRNA METHYLTRANSFERASE 2, MITOCHONDRIAL"/>
    <property type="match status" value="1"/>
</dbReference>
<dbReference type="Pfam" id="PF01728">
    <property type="entry name" value="FtsJ"/>
    <property type="match status" value="1"/>
</dbReference>
<dbReference type="PIRSF" id="PIRSF005461">
    <property type="entry name" value="23S_rRNA_mtase"/>
    <property type="match status" value="1"/>
</dbReference>
<dbReference type="SUPFAM" id="SSF53335">
    <property type="entry name" value="S-adenosyl-L-methionine-dependent methyltransferases"/>
    <property type="match status" value="1"/>
</dbReference>